<accession>A9X1A5</accession>
<evidence type="ECO:0000250" key="1"/>
<evidence type="ECO:0000250" key="2">
    <source>
        <dbReference type="UniProtKB" id="P59242"/>
    </source>
</evidence>
<evidence type="ECO:0000250" key="3">
    <source>
        <dbReference type="UniProtKB" id="Q9P2M7"/>
    </source>
</evidence>
<evidence type="ECO:0000255" key="4"/>
<evidence type="ECO:0000256" key="5">
    <source>
        <dbReference type="SAM" id="MobiDB-lite"/>
    </source>
</evidence>
<evidence type="ECO:0000305" key="6"/>
<protein>
    <recommendedName>
        <fullName evidence="3">Cingulin</fullName>
    </recommendedName>
</protein>
<keyword id="KW-0007">Acetylation</keyword>
<keyword id="KW-0965">Cell junction</keyword>
<keyword id="KW-0175">Coiled coil</keyword>
<keyword id="KW-0597">Phosphoprotein</keyword>
<keyword id="KW-1185">Reference proteome</keyword>
<keyword id="KW-0796">Tight junction</keyword>
<comment type="function">
    <text evidence="1">Probably plays a role in the formation and regulation of the tight junction (TJ) paracellular permeability barrier.</text>
</comment>
<comment type="subunit">
    <text evidence="3">Homodimer (By similarity). Interacts with TJP1/ZO1 and SPEF1 (By similarity).</text>
</comment>
<comment type="subcellular location">
    <subcellularLocation>
        <location evidence="2">Cell junction</location>
        <location evidence="2">Tight junction</location>
    </subcellularLocation>
    <text evidence="2 3">Localizes to the apical junction complex composed of tight and adherens junctions. Colocalizes with SPEF1 at sites of cell-cell contact in intestinal epithelial cells.</text>
</comment>
<comment type="domain">
    <text evidence="1">Deletion of the TJP1/ZO1 interaction motif (ZIM) decreases but does not abolish colocalization with TJP1/ZO1.</text>
</comment>
<comment type="similarity">
    <text evidence="6">Belongs to the cingulin family.</text>
</comment>
<comment type="caution">
    <text evidence="6">It is uncertain whether Met-1 or Met-7 is the initiator.</text>
</comment>
<comment type="sequence caution" evidence="6">
    <conflict type="erroneous initiation">
        <sequence resource="EMBL-CDS" id="ABY40800"/>
    </conflict>
    <text>Truncated N-terminus.</text>
</comment>
<organism>
    <name type="scientific">Papio anubis</name>
    <name type="common">Olive baboon</name>
    <dbReference type="NCBI Taxonomy" id="9555"/>
    <lineage>
        <taxon>Eukaryota</taxon>
        <taxon>Metazoa</taxon>
        <taxon>Chordata</taxon>
        <taxon>Craniata</taxon>
        <taxon>Vertebrata</taxon>
        <taxon>Euteleostomi</taxon>
        <taxon>Mammalia</taxon>
        <taxon>Eutheria</taxon>
        <taxon>Euarchontoglires</taxon>
        <taxon>Primates</taxon>
        <taxon>Haplorrhini</taxon>
        <taxon>Catarrhini</taxon>
        <taxon>Cercopithecidae</taxon>
        <taxon>Cercopithecinae</taxon>
        <taxon>Papio</taxon>
    </lineage>
</organism>
<name>CING_PAPAN</name>
<proteinExistence type="inferred from homology"/>
<dbReference type="EMBL" id="DP000542">
    <property type="protein sequence ID" value="ABY40800.1"/>
    <property type="status" value="ALT_INIT"/>
    <property type="molecule type" value="Genomic_DNA"/>
</dbReference>
<dbReference type="RefSeq" id="NP_001162426.1">
    <property type="nucleotide sequence ID" value="NM_001168955.1"/>
</dbReference>
<dbReference type="SMR" id="A9X1A5"/>
<dbReference type="STRING" id="9555.ENSPANP00000011187"/>
<dbReference type="GeneID" id="100137421"/>
<dbReference type="KEGG" id="panu:100137421"/>
<dbReference type="CTD" id="57530"/>
<dbReference type="eggNOG" id="ENOG502R9EI">
    <property type="taxonomic scope" value="Eukaryota"/>
</dbReference>
<dbReference type="Proteomes" id="UP000028761">
    <property type="component" value="Unplaced"/>
</dbReference>
<dbReference type="GO" id="GO:0005923">
    <property type="term" value="C:bicellular tight junction"/>
    <property type="evidence" value="ECO:0007669"/>
    <property type="project" value="UniProtKB-SubCell"/>
</dbReference>
<dbReference type="GO" id="GO:0016459">
    <property type="term" value="C:myosin complex"/>
    <property type="evidence" value="ECO:0007669"/>
    <property type="project" value="InterPro"/>
</dbReference>
<dbReference type="GO" id="GO:0008017">
    <property type="term" value="F:microtubule binding"/>
    <property type="evidence" value="ECO:0007669"/>
    <property type="project" value="TreeGrafter"/>
</dbReference>
<dbReference type="GO" id="GO:0000226">
    <property type="term" value="P:microtubule cytoskeleton organization"/>
    <property type="evidence" value="ECO:0007669"/>
    <property type="project" value="TreeGrafter"/>
</dbReference>
<dbReference type="InterPro" id="IPR002928">
    <property type="entry name" value="Myosin_tail"/>
</dbReference>
<dbReference type="PANTHER" id="PTHR46349:SF4">
    <property type="entry name" value="CINGULIN"/>
    <property type="match status" value="1"/>
</dbReference>
<dbReference type="PANTHER" id="PTHR46349">
    <property type="entry name" value="CINGULIN-LIKE PROTEIN 1-RELATED"/>
    <property type="match status" value="1"/>
</dbReference>
<dbReference type="Pfam" id="PF01576">
    <property type="entry name" value="Myosin_tail_1"/>
    <property type="match status" value="1"/>
</dbReference>
<feature type="chain" id="PRO_0000371431" description="Cingulin">
    <location>
        <begin position="1"/>
        <end position="1203"/>
    </location>
</feature>
<feature type="region of interest" description="Head" evidence="1">
    <location>
        <begin position="7"/>
        <end position="357"/>
    </location>
</feature>
<feature type="region of interest" description="Disordered" evidence="5">
    <location>
        <begin position="25"/>
        <end position="48"/>
    </location>
</feature>
<feature type="region of interest" description="Interaction with TJP1/ZO1" evidence="3">
    <location>
        <begin position="54"/>
        <end position="67"/>
    </location>
</feature>
<feature type="region of interest" description="Disordered" evidence="5">
    <location>
        <begin position="89"/>
        <end position="268"/>
    </location>
</feature>
<feature type="region of interest" description="Disordered" evidence="5">
    <location>
        <begin position="883"/>
        <end position="908"/>
    </location>
</feature>
<feature type="region of interest" description="Disordered" evidence="5">
    <location>
        <begin position="1160"/>
        <end position="1181"/>
    </location>
</feature>
<feature type="region of interest" description="Tail" evidence="1">
    <location>
        <begin position="1161"/>
        <end position="1203"/>
    </location>
</feature>
<feature type="coiled-coil region" evidence="4">
    <location>
        <begin position="358"/>
        <end position="1160"/>
    </location>
</feature>
<feature type="short sequence motif" description="ZIM">
    <location>
        <begin position="48"/>
        <end position="62"/>
    </location>
</feature>
<feature type="compositionally biased region" description="Polar residues" evidence="5">
    <location>
        <begin position="166"/>
        <end position="191"/>
    </location>
</feature>
<feature type="compositionally biased region" description="Basic and acidic residues" evidence="5">
    <location>
        <begin position="207"/>
        <end position="231"/>
    </location>
</feature>
<feature type="compositionally biased region" description="Low complexity" evidence="5">
    <location>
        <begin position="246"/>
        <end position="267"/>
    </location>
</feature>
<feature type="compositionally biased region" description="Basic and acidic residues" evidence="5">
    <location>
        <begin position="883"/>
        <end position="903"/>
    </location>
</feature>
<feature type="modified residue" description="Phosphoserine" evidence="2">
    <location>
        <position position="96"/>
    </location>
</feature>
<feature type="modified residue" description="Phosphoserine" evidence="3">
    <location>
        <position position="135"/>
    </location>
</feature>
<feature type="modified residue" description="Phosphoserine" evidence="3">
    <location>
        <position position="137"/>
    </location>
</feature>
<feature type="modified residue" description="Phosphoserine" evidence="3">
    <location>
        <position position="140"/>
    </location>
</feature>
<feature type="modified residue" description="Phosphoserine" evidence="3">
    <location>
        <position position="155"/>
    </location>
</feature>
<feature type="modified residue" description="Phosphoserine" evidence="3">
    <location>
        <position position="165"/>
    </location>
</feature>
<feature type="modified residue" description="Phosphoserine" evidence="3">
    <location>
        <position position="214"/>
    </location>
</feature>
<feature type="modified residue" description="Phosphoserine" evidence="3">
    <location>
        <position position="217"/>
    </location>
</feature>
<feature type="modified residue" description="Phosphoserine" evidence="3">
    <location>
        <position position="258"/>
    </location>
</feature>
<feature type="modified residue" description="Phosphoserine" evidence="3">
    <location>
        <position position="276"/>
    </location>
</feature>
<feature type="modified residue" description="Phosphoserine" evidence="2">
    <location>
        <position position="338"/>
    </location>
</feature>
<feature type="modified residue" description="Phosphoserine" evidence="2">
    <location>
        <position position="351"/>
    </location>
</feature>
<feature type="modified residue" description="N6-acetyllysine" evidence="3">
    <location>
        <position position="579"/>
    </location>
</feature>
<feature type="modified residue" description="Phosphoserine" evidence="3">
    <location>
        <position position="1175"/>
    </location>
</feature>
<feature type="modified residue" description="Phosphoserine" evidence="3">
    <location>
        <position position="1176"/>
    </location>
</feature>
<feature type="modified residue" description="Phosphoserine" evidence="3">
    <location>
        <position position="1182"/>
    </location>
</feature>
<reference key="1">
    <citation type="submission" date="2007-12" db="EMBL/GenBank/DDBJ databases">
        <title>NISC comparative sequencing initiative.</title>
        <authorList>
            <person name="Antonellis A."/>
            <person name="Benjamin B."/>
            <person name="Blakesley R.W."/>
            <person name="Bouffard G.G."/>
            <person name="Brinkley C."/>
            <person name="Brooks S."/>
            <person name="Chu G."/>
            <person name="Chub I."/>
            <person name="Coleman H."/>
            <person name="Fuksenko T."/>
            <person name="Gestole M."/>
            <person name="Gregory M."/>
            <person name="Guan X."/>
            <person name="Gupta J."/>
            <person name="Gurson N."/>
            <person name="Han E."/>
            <person name="Han J."/>
            <person name="Hansen N."/>
            <person name="Hargrove A."/>
            <person name="Hines-Harris K."/>
            <person name="Ho S.-L."/>
            <person name="Hu P."/>
            <person name="Hunter G."/>
            <person name="Hurle B."/>
            <person name="Idol J.R."/>
            <person name="Johnson T."/>
            <person name="Knight E."/>
            <person name="Kwong P."/>
            <person name="Lee-Lin S.-Q."/>
            <person name="Legaspi R."/>
            <person name="Madden M."/>
            <person name="Maduro Q.L."/>
            <person name="Maduro V.B."/>
            <person name="Margulies E.H."/>
            <person name="Masiello C."/>
            <person name="Maskeri B."/>
            <person name="McDowell J."/>
            <person name="Merkulov G."/>
            <person name="Montemayor C."/>
            <person name="Mullikin J.C."/>
            <person name="Park M."/>
            <person name="Prasad A."/>
            <person name="Ramsahoye C."/>
            <person name="Reddix-Dugue N."/>
            <person name="Riebow N."/>
            <person name="Schandler K."/>
            <person name="Schueler M.G."/>
            <person name="Sison C."/>
            <person name="Smith L."/>
            <person name="Stantripop S."/>
            <person name="Thomas J.W."/>
            <person name="Thomas P.J."/>
            <person name="Tsipouri V."/>
            <person name="Young A."/>
            <person name="Green E.D."/>
        </authorList>
    </citation>
    <scope>NUCLEOTIDE SEQUENCE [LARGE SCALE GENOMIC DNA]</scope>
</reference>
<gene>
    <name evidence="3" type="primary">CGN</name>
</gene>
<sequence>MEQAPNMAEPRGPVDHGVQIRFITEPVSGAEMGTLRRGGRRPAKDARASTYGVAVRVQGIAGQPFVVLNSGEKGGDSFGVQIKGANDQEASGALGSDFELPENPYSQVKGFPAPSQSSTSDEEPGAYWNGKLLRSQSQASLAGPGPMDPSNRSTSMLELAPKVASPGSTIDTAPLSSVDSLINKFDSQLGGQSRGRTGRRTRMLPPEQRKRSKSLDSRLPRDTLEERERQSTNHWTPSTKYDNHVGSSKQPSQSQSPSPPSGFSRSRQTQDWVLQSFEEPRGRAQDPTMLQFKSTPDLLRDQQEAAPPGSVDHMKATIYGILREGSSESETSVRRKVSLVLEKMQPLVMISSGSTKAVAGQGELTRKVEELQRKLDEEVKRRQKLEPSRVGLERQLEEKTEECSRLQELLERRKGEAQQSNKELQNMKRLLDQGEGLRHGLEAQVMELQNKLKQVQGPEPAKEVLLKDLLETRELLEEVLEGKQRVEEQLRLRERELTALKGALKEEVASRDQEVEHVRQQYQRDTEQLRRSMQDATQDHAVLEAERQKMSALVRGLQRELEETSEETGHWQSMFQKNKEDLRATKQELLQLRMEKEEMEEELGEKIEVLQRELEQARASAGDTRQVEVLKKELLQTQEELKELQAERQSQEVAGRHRDRELEKQLAVLRVEADRGRELEEQNLQLQKTLQQLRQDCEEASKAKMVAEAEAAVLGQRRAAVETTLRETQEENDEFRRRILGLEQQLKETRGLVDGGEAVEARLRDKLQRLEAEKQQLEEALNASQEEEGSLAAAKRALEARLEEAQRGLARLGQEQQTLNRALEEEGKQREVLRRGKAELEEQKHLLDRTVDRLNKELEKIGEDSKQALQQLQAQLDDYKEKARREVADAQRQAKDWASEAEKTSGGLSRLQDEIQRLRQALQASQAERDTARLDKELLAQRLQGLEQEAENKKRSQDDRARQLKGLEEKVSRLEAELDEEKNTVELLTDRVNRGRDQVDQLRTELLQERSARQDLECDKISLERQNKDLKTRLASSEGFQKPSASLSQLESQNQLLQERLQAEEREKTVLQSTNRKLERKVKELSIQIEDERQHVNDQKDQLSLRVKALKRQVDEAEEEIERLDGLRKKAQRELEEQHEVNEQLQARIKSLEKDSWRKASRSAAESALKHEGLSSDEEFDSVYDPSSIASLLTESNLQTSSC</sequence>